<proteinExistence type="inferred from homology"/>
<comment type="function">
    <text evidence="1">Component of the cytochrome b6-f complex, which mediates electron transfer between photosystem II (PSII) and photosystem I (PSI), cyclic electron flow around PSI, and state transitions.</text>
</comment>
<comment type="subunit">
    <text evidence="1">The 4 large subunits of the cytochrome b6-f complex are cytochrome b6, subunit IV (17 kDa polypeptide, PetD), cytochrome f and the Rieske protein, while the 4 small subunits are PetG, PetL, PetM and PetN. The complex functions as a dimer.</text>
</comment>
<comment type="subcellular location">
    <subcellularLocation>
        <location evidence="1">Plastid</location>
        <location evidence="1">Chloroplast thylakoid membrane</location>
        <topology evidence="1">Single-pass membrane protein</topology>
    </subcellularLocation>
</comment>
<comment type="similarity">
    <text evidence="1">Belongs to the PetN family.</text>
</comment>
<geneLocation type="chloroplast"/>
<gene>
    <name evidence="1" type="primary">petN</name>
</gene>
<keyword id="KW-0150">Chloroplast</keyword>
<keyword id="KW-0249">Electron transport</keyword>
<keyword id="KW-0472">Membrane</keyword>
<keyword id="KW-0602">Photosynthesis</keyword>
<keyword id="KW-0934">Plastid</keyword>
<keyword id="KW-0793">Thylakoid</keyword>
<keyword id="KW-0812">Transmembrane</keyword>
<keyword id="KW-1133">Transmembrane helix</keyword>
<keyword id="KW-0813">Transport</keyword>
<name>PETN_PHAVU</name>
<organism>
    <name type="scientific">Phaseolus vulgaris</name>
    <name type="common">Kidney bean</name>
    <name type="synonym">French bean</name>
    <dbReference type="NCBI Taxonomy" id="3885"/>
    <lineage>
        <taxon>Eukaryota</taxon>
        <taxon>Viridiplantae</taxon>
        <taxon>Streptophyta</taxon>
        <taxon>Embryophyta</taxon>
        <taxon>Tracheophyta</taxon>
        <taxon>Spermatophyta</taxon>
        <taxon>Magnoliopsida</taxon>
        <taxon>eudicotyledons</taxon>
        <taxon>Gunneridae</taxon>
        <taxon>Pentapetalae</taxon>
        <taxon>rosids</taxon>
        <taxon>fabids</taxon>
        <taxon>Fabales</taxon>
        <taxon>Fabaceae</taxon>
        <taxon>Papilionoideae</taxon>
        <taxon>50 kb inversion clade</taxon>
        <taxon>NPAAA clade</taxon>
        <taxon>indigoferoid/millettioid clade</taxon>
        <taxon>Phaseoleae</taxon>
        <taxon>Phaseolus</taxon>
    </lineage>
</organism>
<reference key="1">
    <citation type="journal article" date="2007" name="BMC Genomics">
        <title>Rapid evolutionary change of common bean (Phaseolus vulgaris L) plastome, and the genomic diversification of legume chloroplasts.</title>
        <authorList>
            <person name="Guo X."/>
            <person name="Castillo-Ramirez S."/>
            <person name="Gonzalez V."/>
            <person name="Bustos P."/>
            <person name="Fernandez-Vazquez J.L."/>
            <person name="Santamaria R.I."/>
            <person name="Arellano J."/>
            <person name="Cevallos M.A."/>
            <person name="Davila G."/>
        </authorList>
    </citation>
    <scope>NUCLEOTIDE SEQUENCE [LARGE SCALE GENOMIC DNA]</scope>
    <source>
        <strain>cv. Negro Jamapa</strain>
    </source>
</reference>
<reference key="2">
    <citation type="submission" date="2007-10" db="EMBL/GenBank/DDBJ databases">
        <title>Complete nucleotide sequence of the plastid genome of the common bean, Phaseolus vulgaris.</title>
        <authorList>
            <person name="Moore M.J."/>
            <person name="Triplett E.W."/>
            <person name="Broughton W.J."/>
            <person name="Soltis P.S."/>
            <person name="Soltis D.E."/>
        </authorList>
    </citation>
    <scope>NUCLEOTIDE SEQUENCE [LARGE SCALE GENOMIC DNA]</scope>
</reference>
<evidence type="ECO:0000255" key="1">
    <source>
        <dbReference type="HAMAP-Rule" id="MF_00395"/>
    </source>
</evidence>
<sequence length="29" mass="3156">MDIVSIAWAALMVVFSFSLSLVVWGRSGL</sequence>
<protein>
    <recommendedName>
        <fullName evidence="1">Cytochrome b6-f complex subunit 8</fullName>
    </recommendedName>
    <alternativeName>
        <fullName evidence="1">Cytochrome b6-f complex subunit PetN</fullName>
    </alternativeName>
    <alternativeName>
        <fullName evidence="1">Cytochrome b6-f complex subunit VIII</fullName>
    </alternativeName>
</protein>
<accession>A4GGA4</accession>
<dbReference type="EMBL" id="DQ886273">
    <property type="protein sequence ID" value="ABH88085.1"/>
    <property type="molecule type" value="Genomic_DNA"/>
</dbReference>
<dbReference type="EMBL" id="EU196765">
    <property type="protein sequence ID" value="ABW22783.1"/>
    <property type="molecule type" value="Genomic_DNA"/>
</dbReference>
<dbReference type="RefSeq" id="YP_001122805.1">
    <property type="nucleotide sequence ID" value="NC_009259.1"/>
</dbReference>
<dbReference type="SMR" id="A4GGA4"/>
<dbReference type="GeneID" id="4961808"/>
<dbReference type="KEGG" id="pvu:4961808"/>
<dbReference type="GO" id="GO:0009535">
    <property type="term" value="C:chloroplast thylakoid membrane"/>
    <property type="evidence" value="ECO:0007669"/>
    <property type="project" value="UniProtKB-SubCell"/>
</dbReference>
<dbReference type="GO" id="GO:0009512">
    <property type="term" value="C:cytochrome b6f complex"/>
    <property type="evidence" value="ECO:0007669"/>
    <property type="project" value="InterPro"/>
</dbReference>
<dbReference type="GO" id="GO:0045158">
    <property type="term" value="F:electron transporter, transferring electrons within cytochrome b6/f complex of photosystem II activity"/>
    <property type="evidence" value="ECO:0007669"/>
    <property type="project" value="InterPro"/>
</dbReference>
<dbReference type="GO" id="GO:0017004">
    <property type="term" value="P:cytochrome complex assembly"/>
    <property type="evidence" value="ECO:0007669"/>
    <property type="project" value="UniProtKB-UniRule"/>
</dbReference>
<dbReference type="GO" id="GO:0015979">
    <property type="term" value="P:photosynthesis"/>
    <property type="evidence" value="ECO:0007669"/>
    <property type="project" value="UniProtKB-KW"/>
</dbReference>
<dbReference type="HAMAP" id="MF_00395">
    <property type="entry name" value="Cytb6_f_PetN"/>
    <property type="match status" value="1"/>
</dbReference>
<dbReference type="InterPro" id="IPR036143">
    <property type="entry name" value="Cytochr_b6-f_cplx_su8_sf"/>
</dbReference>
<dbReference type="InterPro" id="IPR005497">
    <property type="entry name" value="Cytochrome_b6-f_cplx_su8"/>
</dbReference>
<dbReference type="Pfam" id="PF03742">
    <property type="entry name" value="PetN"/>
    <property type="match status" value="1"/>
</dbReference>
<dbReference type="SUPFAM" id="SSF103451">
    <property type="entry name" value="PetN subunit of the cytochrome b6f complex"/>
    <property type="match status" value="1"/>
</dbReference>
<feature type="chain" id="PRO_0000355457" description="Cytochrome b6-f complex subunit 8">
    <location>
        <begin position="1"/>
        <end position="29"/>
    </location>
</feature>
<feature type="transmembrane region" description="Helical" evidence="1">
    <location>
        <begin position="3"/>
        <end position="23"/>
    </location>
</feature>